<gene>
    <name evidence="1" type="primary">kdpA2</name>
    <name type="synonym">kdpA</name>
    <name type="ordered locus">SAV0072</name>
</gene>
<sequence>MSIVLFLIVFILLSLIVSRYLYSVALNVPSKIDVVFNPIEKLIYQLIGTKLEHMSGKTYIKHFLLFNGLMGGLSFVLLLIQQWLFLNPNHNLNQSVSLAFNTMASFLTNTNLQHYAGETDLSYLTQMCVITFLMFTSAASGYAVCIAMLRRLTGMTDVIGNFYQDITRFIVRVLIPFALIISLFLISQGTPQTLKGNLVIETLSGVKQTIAYGPMASLESIKHLGTNGGGFLGANSSTPFENPTYWSNYAEALSMMLIPGSLVFLFGRMLKTKLQIHPHAIMIFVAMFVMFIGFLVTCLYFEFAGNPVLHHLGIAGGNMEGKETRFGIGLSALFTTITTAFTTGTVNNMHDSLTPLGGMVPMVLMMLNAVFGGEGVGLMNMLIYVMLTVFICSLMIGKTPSYLGMKIEGKEMKLIALSFLVHPLLILVFSALAFIVPGASDALTNPQFHGVSQVLYEFTSSSANNGSGFEGLGDNTVFWNISTGIVMLLARYIPIVLQILIVSSLVNKKTYQQHTQDVPINNLFFSSVLIIFIILLSGLTFLPDLMLGPIGEQLLLHA</sequence>
<dbReference type="EMBL" id="BA000017">
    <property type="protein sequence ID" value="BAB56234.1"/>
    <property type="molecule type" value="Genomic_DNA"/>
</dbReference>
<dbReference type="RefSeq" id="WP_000029430.1">
    <property type="nucleotide sequence ID" value="NC_002758.2"/>
</dbReference>
<dbReference type="SMR" id="P0A056"/>
<dbReference type="KEGG" id="sav:SAV0072"/>
<dbReference type="HOGENOM" id="CLU_018614_3_0_9"/>
<dbReference type="PhylomeDB" id="P0A056"/>
<dbReference type="Proteomes" id="UP000002481">
    <property type="component" value="Chromosome"/>
</dbReference>
<dbReference type="GO" id="GO:0005886">
    <property type="term" value="C:plasma membrane"/>
    <property type="evidence" value="ECO:0007669"/>
    <property type="project" value="UniProtKB-SubCell"/>
</dbReference>
<dbReference type="GO" id="GO:0008556">
    <property type="term" value="F:P-type potassium transmembrane transporter activity"/>
    <property type="evidence" value="ECO:0007669"/>
    <property type="project" value="InterPro"/>
</dbReference>
<dbReference type="GO" id="GO:0030955">
    <property type="term" value="F:potassium ion binding"/>
    <property type="evidence" value="ECO:0007669"/>
    <property type="project" value="UniProtKB-UniRule"/>
</dbReference>
<dbReference type="HAMAP" id="MF_00275">
    <property type="entry name" value="KdpA"/>
    <property type="match status" value="1"/>
</dbReference>
<dbReference type="InterPro" id="IPR004623">
    <property type="entry name" value="KdpA"/>
</dbReference>
<dbReference type="NCBIfam" id="TIGR00680">
    <property type="entry name" value="kdpA"/>
    <property type="match status" value="1"/>
</dbReference>
<dbReference type="PANTHER" id="PTHR30607">
    <property type="entry name" value="POTASSIUM-TRANSPORTING ATPASE A CHAIN"/>
    <property type="match status" value="1"/>
</dbReference>
<dbReference type="PANTHER" id="PTHR30607:SF2">
    <property type="entry name" value="POTASSIUM-TRANSPORTING ATPASE POTASSIUM-BINDING SUBUNIT"/>
    <property type="match status" value="1"/>
</dbReference>
<dbReference type="Pfam" id="PF03814">
    <property type="entry name" value="KdpA"/>
    <property type="match status" value="1"/>
</dbReference>
<dbReference type="PIRSF" id="PIRSF001294">
    <property type="entry name" value="K_ATPaseA"/>
    <property type="match status" value="1"/>
</dbReference>
<reference key="1">
    <citation type="journal article" date="2001" name="Lancet">
        <title>Whole genome sequencing of meticillin-resistant Staphylococcus aureus.</title>
        <authorList>
            <person name="Kuroda M."/>
            <person name="Ohta T."/>
            <person name="Uchiyama I."/>
            <person name="Baba T."/>
            <person name="Yuzawa H."/>
            <person name="Kobayashi I."/>
            <person name="Cui L."/>
            <person name="Oguchi A."/>
            <person name="Aoki K."/>
            <person name="Nagai Y."/>
            <person name="Lian J.-Q."/>
            <person name="Ito T."/>
            <person name="Kanamori M."/>
            <person name="Matsumaru H."/>
            <person name="Maruyama A."/>
            <person name="Murakami H."/>
            <person name="Hosoyama A."/>
            <person name="Mizutani-Ui Y."/>
            <person name="Takahashi N.K."/>
            <person name="Sawano T."/>
            <person name="Inoue R."/>
            <person name="Kaito C."/>
            <person name="Sekimizu K."/>
            <person name="Hirakawa H."/>
            <person name="Kuhara S."/>
            <person name="Goto S."/>
            <person name="Yabuzaki J."/>
            <person name="Kanehisa M."/>
            <person name="Yamashita A."/>
            <person name="Oshima K."/>
            <person name="Furuya K."/>
            <person name="Yoshino C."/>
            <person name="Shiba T."/>
            <person name="Hattori M."/>
            <person name="Ogasawara N."/>
            <person name="Hayashi H."/>
            <person name="Hiramatsu K."/>
        </authorList>
    </citation>
    <scope>NUCLEOTIDE SEQUENCE [LARGE SCALE GENOMIC DNA]</scope>
    <source>
        <strain>Mu50 / ATCC 700699</strain>
    </source>
</reference>
<keyword id="KW-1003">Cell membrane</keyword>
<keyword id="KW-0406">Ion transport</keyword>
<keyword id="KW-0472">Membrane</keyword>
<keyword id="KW-0630">Potassium</keyword>
<keyword id="KW-0633">Potassium transport</keyword>
<keyword id="KW-0812">Transmembrane</keyword>
<keyword id="KW-1133">Transmembrane helix</keyword>
<keyword id="KW-0813">Transport</keyword>
<proteinExistence type="inferred from homology"/>
<name>KDPA2_STAAM</name>
<accession>P0A056</accession>
<accession>Q99QS8</accession>
<accession>Q9LC50</accession>
<accession>Q9XBA7</accession>
<feature type="chain" id="PRO_0000166526" description="Potassium-transporting ATPase potassium-binding subunit 2">
    <location>
        <begin position="1"/>
        <end position="558"/>
    </location>
</feature>
<feature type="transmembrane region" description="Helical" evidence="1">
    <location>
        <begin position="1"/>
        <end position="21"/>
    </location>
</feature>
<feature type="transmembrane region" description="Helical" evidence="1">
    <location>
        <begin position="60"/>
        <end position="80"/>
    </location>
</feature>
<feature type="transmembrane region" description="Helical" evidence="1">
    <location>
        <begin position="129"/>
        <end position="149"/>
    </location>
</feature>
<feature type="transmembrane region" description="Helical" evidence="1">
    <location>
        <begin position="169"/>
        <end position="189"/>
    </location>
</feature>
<feature type="transmembrane region" description="Helical" evidence="1">
    <location>
        <begin position="246"/>
        <end position="266"/>
    </location>
</feature>
<feature type="transmembrane region" description="Helical" evidence="1">
    <location>
        <begin position="281"/>
        <end position="301"/>
    </location>
</feature>
<feature type="transmembrane region" description="Helical" evidence="1">
    <location>
        <begin position="326"/>
        <end position="346"/>
    </location>
</feature>
<feature type="transmembrane region" description="Helical" evidence="1">
    <location>
        <begin position="353"/>
        <end position="373"/>
    </location>
</feature>
<feature type="transmembrane region" description="Helical" evidence="1">
    <location>
        <begin position="376"/>
        <end position="396"/>
    </location>
</feature>
<feature type="transmembrane region" description="Helical" evidence="1">
    <location>
        <begin position="415"/>
        <end position="435"/>
    </location>
</feature>
<feature type="transmembrane region" description="Helical" evidence="1">
    <location>
        <begin position="485"/>
        <end position="505"/>
    </location>
</feature>
<feature type="transmembrane region" description="Helical" evidence="1">
    <location>
        <begin position="523"/>
        <end position="543"/>
    </location>
</feature>
<organism>
    <name type="scientific">Staphylococcus aureus (strain Mu50 / ATCC 700699)</name>
    <dbReference type="NCBI Taxonomy" id="158878"/>
    <lineage>
        <taxon>Bacteria</taxon>
        <taxon>Bacillati</taxon>
        <taxon>Bacillota</taxon>
        <taxon>Bacilli</taxon>
        <taxon>Bacillales</taxon>
        <taxon>Staphylococcaceae</taxon>
        <taxon>Staphylococcus</taxon>
    </lineage>
</organism>
<comment type="function">
    <text evidence="1">Part of the high-affinity ATP-driven potassium transport (or Kdp) system, which catalyzes the hydrolysis of ATP coupled with the electrogenic transport of potassium into the cytoplasm. This subunit binds the extracellular potassium ions and delivers the ions to the membrane domain of KdpB through an intramembrane tunnel.</text>
</comment>
<comment type="subunit">
    <text evidence="1">The system is composed of three essential subunits: KdpA, KdpB and KdpC.</text>
</comment>
<comment type="subcellular location">
    <subcellularLocation>
        <location evidence="1">Cell membrane</location>
        <topology evidence="1">Multi-pass membrane protein</topology>
    </subcellularLocation>
</comment>
<comment type="similarity">
    <text evidence="1">Belongs to the KdpA family.</text>
</comment>
<evidence type="ECO:0000255" key="1">
    <source>
        <dbReference type="HAMAP-Rule" id="MF_00275"/>
    </source>
</evidence>
<protein>
    <recommendedName>
        <fullName evidence="1">Potassium-transporting ATPase potassium-binding subunit 2</fullName>
    </recommendedName>
    <alternativeName>
        <fullName evidence="1">ATP phosphohydrolase [potassium-transporting] A chain 2</fullName>
    </alternativeName>
    <alternativeName>
        <fullName evidence="1">Potassium-binding and translocating subunit A 2</fullName>
    </alternativeName>
    <alternativeName>
        <fullName evidence="1">Potassium-translocating ATPase A chain 2</fullName>
    </alternativeName>
</protein>